<protein>
    <recommendedName>
        <fullName>ABSCISIC ACID-INSENSITIVE 5-like protein 5</fullName>
    </recommendedName>
    <alternativeName>
        <fullName>ABA-responsive element-binding protein 1</fullName>
    </alternativeName>
    <alternativeName>
        <fullName>Abscisic acid responsive elements-binding factor 2</fullName>
        <shortName>ABRE-binding factor 2</shortName>
    </alternativeName>
    <alternativeName>
        <fullName>bZIP transcription factor 36</fullName>
        <shortName>AtbZIP36</shortName>
    </alternativeName>
</protein>
<proteinExistence type="evidence at protein level"/>
<accession>Q9M7Q4</accession>
<name>AI5L5_ARATH</name>
<organism>
    <name type="scientific">Arabidopsis thaliana</name>
    <name type="common">Mouse-ear cress</name>
    <dbReference type="NCBI Taxonomy" id="3702"/>
    <lineage>
        <taxon>Eukaryota</taxon>
        <taxon>Viridiplantae</taxon>
        <taxon>Streptophyta</taxon>
        <taxon>Embryophyta</taxon>
        <taxon>Tracheophyta</taxon>
        <taxon>Spermatophyta</taxon>
        <taxon>Magnoliopsida</taxon>
        <taxon>eudicotyledons</taxon>
        <taxon>Gunneridae</taxon>
        <taxon>Pentapetalae</taxon>
        <taxon>rosids</taxon>
        <taxon>malvids</taxon>
        <taxon>Brassicales</taxon>
        <taxon>Brassicaceae</taxon>
        <taxon>Camelineae</taxon>
        <taxon>Arabidopsis</taxon>
    </lineage>
</organism>
<reference key="1">
    <citation type="journal article" date="2000" name="J. Biol. Chem.">
        <title>ABFs, a family of ABA-responsive element binding factors.</title>
        <authorList>
            <person name="Choi H.-I."/>
            <person name="Hong J.-H."/>
            <person name="Ha J.-O."/>
            <person name="Kang J.-Y."/>
            <person name="Kim S.Y."/>
        </authorList>
    </citation>
    <scope>NUCLEOTIDE SEQUENCE [MRNA]</scope>
    <scope>DNA-BINDING</scope>
    <scope>INDUCTION</scope>
    <source>
        <strain>cv. Columbia</strain>
        <tissue>Seedling</tissue>
    </source>
</reference>
<reference key="2">
    <citation type="journal article" date="2000" name="Proc. Natl. Acad. Sci. U.S.A.">
        <title>Arabidopsis basic leucine zipper transcription factors involved in an abscisic acid-dependent signal transduction pathway under drought and high-salinity conditions.</title>
        <authorList>
            <person name="Uno Y."/>
            <person name="Furihata T."/>
            <person name="Abe H."/>
            <person name="Yoshida R."/>
            <person name="Shinozaki K."/>
            <person name="Yamaguchi-Shinozaki K."/>
        </authorList>
    </citation>
    <scope>NUCLEOTIDE SEQUENCE [MRNA]</scope>
    <scope>FUNCTION</scope>
    <scope>TISSUE SPECIFICITY</scope>
    <scope>INDUCTION</scope>
</reference>
<reference key="3">
    <citation type="journal article" date="2000" name="Nature">
        <title>Sequence and analysis of chromosome 1 of the plant Arabidopsis thaliana.</title>
        <authorList>
            <person name="Theologis A."/>
            <person name="Ecker J.R."/>
            <person name="Palm C.J."/>
            <person name="Federspiel N.A."/>
            <person name="Kaul S."/>
            <person name="White O."/>
            <person name="Alonso J."/>
            <person name="Altafi H."/>
            <person name="Araujo R."/>
            <person name="Bowman C.L."/>
            <person name="Brooks S.Y."/>
            <person name="Buehler E."/>
            <person name="Chan A."/>
            <person name="Chao Q."/>
            <person name="Chen H."/>
            <person name="Cheuk R.F."/>
            <person name="Chin C.W."/>
            <person name="Chung M.K."/>
            <person name="Conn L."/>
            <person name="Conway A.B."/>
            <person name="Conway A.R."/>
            <person name="Creasy T.H."/>
            <person name="Dewar K."/>
            <person name="Dunn P."/>
            <person name="Etgu P."/>
            <person name="Feldblyum T.V."/>
            <person name="Feng J.-D."/>
            <person name="Fong B."/>
            <person name="Fujii C.Y."/>
            <person name="Gill J.E."/>
            <person name="Goldsmith A.D."/>
            <person name="Haas B."/>
            <person name="Hansen N.F."/>
            <person name="Hughes B."/>
            <person name="Huizar L."/>
            <person name="Hunter J.L."/>
            <person name="Jenkins J."/>
            <person name="Johnson-Hopson C."/>
            <person name="Khan S."/>
            <person name="Khaykin E."/>
            <person name="Kim C.J."/>
            <person name="Koo H.L."/>
            <person name="Kremenetskaia I."/>
            <person name="Kurtz D.B."/>
            <person name="Kwan A."/>
            <person name="Lam B."/>
            <person name="Langin-Hooper S."/>
            <person name="Lee A."/>
            <person name="Lee J.M."/>
            <person name="Lenz C.A."/>
            <person name="Li J.H."/>
            <person name="Li Y.-P."/>
            <person name="Lin X."/>
            <person name="Liu S.X."/>
            <person name="Liu Z.A."/>
            <person name="Luros J.S."/>
            <person name="Maiti R."/>
            <person name="Marziali A."/>
            <person name="Militscher J."/>
            <person name="Miranda M."/>
            <person name="Nguyen M."/>
            <person name="Nierman W.C."/>
            <person name="Osborne B.I."/>
            <person name="Pai G."/>
            <person name="Peterson J."/>
            <person name="Pham P.K."/>
            <person name="Rizzo M."/>
            <person name="Rooney T."/>
            <person name="Rowley D."/>
            <person name="Sakano H."/>
            <person name="Salzberg S.L."/>
            <person name="Schwartz J.R."/>
            <person name="Shinn P."/>
            <person name="Southwick A.M."/>
            <person name="Sun H."/>
            <person name="Tallon L.J."/>
            <person name="Tambunga G."/>
            <person name="Toriumi M.J."/>
            <person name="Town C.D."/>
            <person name="Utterback T."/>
            <person name="Van Aken S."/>
            <person name="Vaysberg M."/>
            <person name="Vysotskaia V.S."/>
            <person name="Walker M."/>
            <person name="Wu D."/>
            <person name="Yu G."/>
            <person name="Fraser C.M."/>
            <person name="Venter J.C."/>
            <person name="Davis R.W."/>
        </authorList>
    </citation>
    <scope>NUCLEOTIDE SEQUENCE [LARGE SCALE GENOMIC DNA]</scope>
    <source>
        <strain>cv. Columbia</strain>
    </source>
</reference>
<reference key="4">
    <citation type="journal article" date="2017" name="Plant J.">
        <title>Araport11: a complete reannotation of the Arabidopsis thaliana reference genome.</title>
        <authorList>
            <person name="Cheng C.Y."/>
            <person name="Krishnakumar V."/>
            <person name="Chan A.P."/>
            <person name="Thibaud-Nissen F."/>
            <person name="Schobel S."/>
            <person name="Town C.D."/>
        </authorList>
    </citation>
    <scope>GENOME REANNOTATION</scope>
    <source>
        <strain>cv. Columbia</strain>
    </source>
</reference>
<reference key="5">
    <citation type="submission" date="2006-08" db="EMBL/GenBank/DDBJ databases">
        <title>Arabidopsis ORF Clones.</title>
        <authorList>
            <person name="Quinitio C."/>
            <person name="Chen H."/>
            <person name="Kim C.J."/>
            <person name="Shinn P."/>
            <person name="Ecker J.R."/>
        </authorList>
    </citation>
    <scope>NUCLEOTIDE SEQUENCE [LARGE SCALE MRNA]</scope>
    <source>
        <strain>cv. Columbia</strain>
    </source>
</reference>
<reference key="6">
    <citation type="journal article" date="2002" name="Trends Plant Sci.">
        <title>bZIP transcription factors in Arabidopsis.</title>
        <authorList>
            <person name="Jakoby M."/>
            <person name="Weisshaar B."/>
            <person name="Droege-Laser W."/>
            <person name="Vicente-Carbajosa J."/>
            <person name="Tiedemann J."/>
            <person name="Kroj T."/>
            <person name="Parcy F."/>
        </authorList>
    </citation>
    <scope>GENE FAMILY</scope>
    <scope>NOMENCLATURE</scope>
</reference>
<reference key="7">
    <citation type="journal article" date="2004" name="Plant J.">
        <title>ABF2, an ABRE-binding bZIP factor, is an essential component of glucose signaling and its overexpression affects multiple stress tolerance.</title>
        <authorList>
            <person name="Kim S."/>
            <person name="Kang J.-Y."/>
            <person name="Cho D.-I."/>
            <person name="Park J.H."/>
            <person name="Kim S.Y."/>
        </authorList>
    </citation>
    <scope>FUNCTION</scope>
    <scope>TISSUE SPECIFICITY</scope>
    <scope>INDUCTION</scope>
    <scope>DISRUPTION PHENOTYPE</scope>
</reference>
<reference key="8">
    <citation type="journal article" date="2004" name="Plant Physiol.">
        <title>ARIA, an Arabidopsis arm repeat protein interacting with a transcriptional regulator of abscisic acid-responsive gene expression, is a novel abscisic acid signaling component.</title>
        <authorList>
            <person name="Kim S."/>
            <person name="Choi H.I."/>
            <person name="Ryu H.J."/>
            <person name="Park J.H."/>
            <person name="Kim M.D."/>
            <person name="Kim S.Y."/>
        </authorList>
    </citation>
    <scope>INTERACTION WITH ARIA</scope>
    <scope>SUBCELLULAR LOCATION</scope>
</reference>
<reference key="9">
    <citation type="journal article" date="2005" name="Plant Cell">
        <title>AREB1 is a transcription activator of novel ABRE-dependent ABA signaling that enhances drought stress tolerance in Arabidopsis.</title>
        <authorList>
            <person name="Fujita Y."/>
            <person name="Fujita M."/>
            <person name="Satoh R."/>
            <person name="Maruyama K."/>
            <person name="Parvez M.M."/>
            <person name="Seki M."/>
            <person name="Hiratsu K."/>
            <person name="Ohme-Takagi M."/>
            <person name="Shinozaki K."/>
            <person name="Yamaguchi-Shinozaki K."/>
        </authorList>
    </citation>
    <scope>FUNCTION</scope>
    <scope>SUBCELLULAR LOCATION</scope>
    <scope>TISSUE SPECIFICITY</scope>
    <scope>INDUCTION</scope>
    <scope>DISRUPTION PHENOTYPE</scope>
</reference>
<reference key="10">
    <citation type="journal article" date="2006" name="Plant Mol. Biol.">
        <title>Transcriptional regulation of ABI3- and ABA-responsive genes including RD29B and RD29A in seeds, germinating embryos, and seedlings of Arabidopsis.</title>
        <authorList>
            <person name="Nakashima K."/>
            <person name="Fujita Y."/>
            <person name="Katsura K."/>
            <person name="Maruyama K."/>
            <person name="Narusaka Y."/>
            <person name="Seki M."/>
            <person name="Shinozaki K."/>
            <person name="Yamaguchi-Shinozaki K."/>
        </authorList>
    </citation>
    <scope>FUNCTION</scope>
    <scope>INDUCTION</scope>
</reference>
<reference key="11">
    <citation type="journal article" date="2006" name="Proc. Natl. Acad. Sci. U.S.A.">
        <title>Abscisic acid-dependent multisite phosphorylation regulates the activity of a transcription activator AREB1.</title>
        <authorList>
            <person name="Furihata T."/>
            <person name="Maruyama K."/>
            <person name="Fujita Y."/>
            <person name="Umezawa T."/>
            <person name="Yoshida R."/>
            <person name="Shinozaki K."/>
            <person name="Yamaguchi-Shinozaki K."/>
        </authorList>
    </citation>
    <scope>ACTIVATION BY PHOSPHORYLATION</scope>
    <scope>MUTAGENESIS OF SER-26; SER-86; SER-94 AND THR-135</scope>
</reference>
<reference key="12">
    <citation type="journal article" date="2007" name="Plant Cell">
        <title>Identification of two protein kinases required for abscisic acid regulation of seed germination, root growth, and gene expression in Arabidopsis.</title>
        <authorList>
            <person name="Fujii H."/>
            <person name="Verslues P.E."/>
            <person name="Zhu J.-K."/>
        </authorList>
    </citation>
    <scope>PHOSPHORYLATION BY SRK2D AND SRK2I</scope>
</reference>
<sequence length="416" mass="44165">MDGSMNLGNEPPGDGGGGGGLTRQGSIYSLTFDEFQSSVGKDFGSMNMDELLKNIWSAEETQAMASGVVPVLGGGQEGLQLQRQGSLTLPRTLSQKTVDQVWKDLSKVGSSGVGGSNLSQVAQAQSQSQSQRQQTLGEVTLEEFLVRAGVVREEAQVAARAQIAENNKGGYFGNDANTGFSVEFQQPSPRVVAAGVMGNLGAETANSLQVQGSSLPLNVNGARTTYQQSQQQQPIMPKQPGFGYGTQMGQLNSPGIRGGGLVGLGDQSLTNNVGFVQGASAAIPGALGVGAVSPVTPLSSEGIGKSNGDSSSLSPSPYMFNGGVRGRKSGTVEKVVERRQRRMIKNRESAARSRARKQAYTVELEAEVAKLKEENDELQRKQARIMEMQKNQETEMRNLLQGGPKKKLRRTESGPW</sequence>
<dbReference type="EMBL" id="AF093545">
    <property type="protein sequence ID" value="AAF27180.1"/>
    <property type="molecule type" value="mRNA"/>
</dbReference>
<dbReference type="EMBL" id="AB017160">
    <property type="protein sequence ID" value="BAB12404.1"/>
    <property type="molecule type" value="mRNA"/>
</dbReference>
<dbReference type="EMBL" id="AC084820">
    <property type="status" value="NOT_ANNOTATED_CDS"/>
    <property type="molecule type" value="Genomic_DNA"/>
</dbReference>
<dbReference type="EMBL" id="CP002684">
    <property type="protein sequence ID" value="AEE32110.1"/>
    <property type="molecule type" value="Genomic_DNA"/>
</dbReference>
<dbReference type="EMBL" id="BT026443">
    <property type="protein sequence ID" value="ABH04550.1"/>
    <property type="molecule type" value="mRNA"/>
</dbReference>
<dbReference type="RefSeq" id="NP_849777.1">
    <molecule id="Q9M7Q4-1"/>
    <property type="nucleotide sequence ID" value="NM_179446.5"/>
</dbReference>
<dbReference type="SMR" id="Q9M7Q4"/>
<dbReference type="BioGRID" id="26320">
    <property type="interactions" value="26"/>
</dbReference>
<dbReference type="DIP" id="DIP-38544N"/>
<dbReference type="FunCoup" id="Q9M7Q4">
    <property type="interactions" value="553"/>
</dbReference>
<dbReference type="IntAct" id="Q9M7Q4">
    <property type="interactions" value="7"/>
</dbReference>
<dbReference type="STRING" id="3702.Q9M7Q4"/>
<dbReference type="iPTMnet" id="Q9M7Q4"/>
<dbReference type="PaxDb" id="3702-AT1G45249.3"/>
<dbReference type="ProteomicsDB" id="244776">
    <molecule id="Q9M7Q4-1"/>
</dbReference>
<dbReference type="EnsemblPlants" id="AT1G45249.1">
    <molecule id="Q9M7Q4-1"/>
    <property type="protein sequence ID" value="AT1G45249.1"/>
    <property type="gene ID" value="AT1G45249"/>
</dbReference>
<dbReference type="GeneID" id="841095"/>
<dbReference type="Gramene" id="AT1G45249.1">
    <molecule id="Q9M7Q4-1"/>
    <property type="protein sequence ID" value="AT1G45249.1"/>
    <property type="gene ID" value="AT1G45249"/>
</dbReference>
<dbReference type="KEGG" id="ath:AT1G45249"/>
<dbReference type="Araport" id="AT1G45249"/>
<dbReference type="TAIR" id="AT1G45249">
    <property type="gene designation" value="ABF2"/>
</dbReference>
<dbReference type="eggNOG" id="ENOG502QPP6">
    <property type="taxonomic scope" value="Eukaryota"/>
</dbReference>
<dbReference type="HOGENOM" id="CLU_043238_1_0_1"/>
<dbReference type="InParanoid" id="Q9M7Q4"/>
<dbReference type="PhylomeDB" id="Q9M7Q4"/>
<dbReference type="PRO" id="PR:Q9M7Q4"/>
<dbReference type="Proteomes" id="UP000006548">
    <property type="component" value="Chromosome 1"/>
</dbReference>
<dbReference type="ExpressionAtlas" id="Q9M7Q4">
    <property type="expression patterns" value="baseline and differential"/>
</dbReference>
<dbReference type="GO" id="GO:0005634">
    <property type="term" value="C:nucleus"/>
    <property type="evidence" value="ECO:0000314"/>
    <property type="project" value="UniProtKB"/>
</dbReference>
<dbReference type="GO" id="GO:0003677">
    <property type="term" value="F:DNA binding"/>
    <property type="evidence" value="ECO:0007669"/>
    <property type="project" value="UniProtKB-KW"/>
</dbReference>
<dbReference type="GO" id="GO:0003700">
    <property type="term" value="F:DNA-binding transcription factor activity"/>
    <property type="evidence" value="ECO:0007669"/>
    <property type="project" value="InterPro"/>
</dbReference>
<dbReference type="GO" id="GO:0009738">
    <property type="term" value="P:abscisic acid-activated signaling pathway"/>
    <property type="evidence" value="ECO:0007669"/>
    <property type="project" value="UniProtKB-KW"/>
</dbReference>
<dbReference type="GO" id="GO:0045893">
    <property type="term" value="P:positive regulation of DNA-templated transcription"/>
    <property type="evidence" value="ECO:0007669"/>
    <property type="project" value="InterPro"/>
</dbReference>
<dbReference type="CDD" id="cd14707">
    <property type="entry name" value="bZIP_plant_BZIP46"/>
    <property type="match status" value="1"/>
</dbReference>
<dbReference type="FunFam" id="1.20.5.170:FF:000048">
    <property type="entry name" value="ABSCISIC ACID-INSENSITIVE 5-like protein 5"/>
    <property type="match status" value="1"/>
</dbReference>
<dbReference type="Gene3D" id="1.20.5.170">
    <property type="match status" value="1"/>
</dbReference>
<dbReference type="InterPro" id="IPR004827">
    <property type="entry name" value="bZIP"/>
</dbReference>
<dbReference type="InterPro" id="IPR043452">
    <property type="entry name" value="BZIP46-like"/>
</dbReference>
<dbReference type="InterPro" id="IPR046347">
    <property type="entry name" value="bZIP_sf"/>
</dbReference>
<dbReference type="PANTHER" id="PTHR22952:SF446">
    <property type="entry name" value="ABSCISIC ACID-INSENSITIVE 5-LIKE PROTEIN 5-RELATED"/>
    <property type="match status" value="1"/>
</dbReference>
<dbReference type="PANTHER" id="PTHR22952">
    <property type="entry name" value="CAMP-RESPONSE ELEMENT BINDING PROTEIN-RELATED"/>
    <property type="match status" value="1"/>
</dbReference>
<dbReference type="Pfam" id="PF00170">
    <property type="entry name" value="bZIP_1"/>
    <property type="match status" value="1"/>
</dbReference>
<dbReference type="SMART" id="SM00338">
    <property type="entry name" value="BRLZ"/>
    <property type="match status" value="1"/>
</dbReference>
<dbReference type="SUPFAM" id="SSF57959">
    <property type="entry name" value="Leucine zipper domain"/>
    <property type="match status" value="1"/>
</dbReference>
<dbReference type="PROSITE" id="PS50217">
    <property type="entry name" value="BZIP"/>
    <property type="match status" value="1"/>
</dbReference>
<dbReference type="PROSITE" id="PS00036">
    <property type="entry name" value="BZIP_BASIC"/>
    <property type="match status" value="1"/>
</dbReference>
<keyword id="KW-0938">Abscisic acid signaling pathway</keyword>
<keyword id="KW-0010">Activator</keyword>
<keyword id="KW-0025">Alternative splicing</keyword>
<keyword id="KW-0238">DNA-binding</keyword>
<keyword id="KW-0539">Nucleus</keyword>
<keyword id="KW-0597">Phosphoprotein</keyword>
<keyword id="KW-1185">Reference proteome</keyword>
<keyword id="KW-0804">Transcription</keyword>
<keyword id="KW-0805">Transcription regulation</keyword>
<gene>
    <name type="primary">ABF2</name>
    <name type="synonym">AREB1</name>
    <name type="synonym">BZIP36</name>
    <name type="ordered locus">At1g45249</name>
    <name type="ORF">T2P3</name>
</gene>
<comment type="function">
    <text evidence="8 9 11 13">Involved in ABA and stress responses and acts as a positive component of glucose signal transduction. Functions as a transcriptional activator in the ABA-inducible expression of rd29B. Binds specifically to the ABA-responsive element (ABRE) of the rd29B gene promoter.</text>
</comment>
<comment type="subunit">
    <text evidence="1 10">DNA-binding heterodimer (By similarity). Interacts with ARIA.</text>
</comment>
<comment type="interaction">
    <interactant intactId="EBI-1538369">
        <id>Q9M7Q4</id>
    </interactant>
    <interactant intactId="EBI-782514">
        <id>Q940H6</id>
        <label>SRK2E</label>
    </interactant>
    <organismsDiffer>false</organismsDiffer>
    <experiments>2</experiments>
</comment>
<comment type="subcellular location">
    <subcellularLocation>
        <location evidence="5 10 11">Nucleus</location>
    </subcellularLocation>
</comment>
<comment type="alternative products">
    <event type="alternative splicing"/>
    <isoform>
        <id>Q9M7Q4-1</id>
        <name>1</name>
        <sequence type="displayed"/>
    </isoform>
    <text>A number of isoforms are produced. According to EST sequences.</text>
</comment>
<comment type="tissue specificity">
    <text evidence="8 9 11">Expressed in roots, leaves, flowers and siliques but not in seeds.</text>
</comment>
<comment type="induction">
    <text evidence="7 8 9 11 13">Up-regulated by drought, salt, abscisic acid (ABA), cold and glucose.</text>
</comment>
<comment type="PTM">
    <text evidence="14">The activation by phosphorylation is induced by abscisic acid (ABA). Phosphorylated by SRK2C, SRK2D, SRK2E, SRK2F and SRK2I in vitro.</text>
</comment>
<comment type="disruption phenotype">
    <text evidence="9 11">Defective in glucose response and grows faster. Exhibits abscisic acid (ABA) insensitivity.</text>
</comment>
<comment type="similarity">
    <text evidence="15">Belongs to the bZIP family. ABI5 subfamily.</text>
</comment>
<feature type="chain" id="PRO_0000369610" description="ABSCISIC ACID-INSENSITIVE 5-like protein 5">
    <location>
        <begin position="1"/>
        <end position="416"/>
    </location>
</feature>
<feature type="domain" description="bZIP" evidence="5">
    <location>
        <begin position="336"/>
        <end position="399"/>
    </location>
</feature>
<feature type="region of interest" description="Disordered" evidence="6">
    <location>
        <begin position="1"/>
        <end position="23"/>
    </location>
</feature>
<feature type="region of interest" description="Disordered" evidence="6">
    <location>
        <begin position="300"/>
        <end position="326"/>
    </location>
</feature>
<feature type="region of interest" description="Basic motif" evidence="5">
    <location>
        <begin position="338"/>
        <end position="357"/>
    </location>
</feature>
<feature type="region of interest" description="Leucine-zipper" evidence="5">
    <location>
        <begin position="364"/>
        <end position="385"/>
    </location>
</feature>
<feature type="region of interest" description="Disordered" evidence="6">
    <location>
        <begin position="388"/>
        <end position="416"/>
    </location>
</feature>
<feature type="compositionally biased region" description="Gly residues" evidence="6">
    <location>
        <begin position="13"/>
        <end position="22"/>
    </location>
</feature>
<feature type="modified residue" description="Phosphoserine" evidence="4">
    <location>
        <position position="26"/>
    </location>
</feature>
<feature type="modified residue" description="Phosphoserine" evidence="2">
    <location>
        <position position="45"/>
    </location>
</feature>
<feature type="modified residue" description="Phosphoserine" evidence="3">
    <location>
        <position position="86"/>
    </location>
</feature>
<feature type="modified residue" description="Phosphothreonine" evidence="4">
    <location>
        <position position="135"/>
    </location>
</feature>
<feature type="mutagenesis site" description="Abolishes ABA-dependent phosphorylation." evidence="12">
    <original>S</original>
    <variation>A</variation>
    <location>
        <position position="26"/>
    </location>
</feature>
<feature type="mutagenesis site" description="Abolishes ABA-dependent phosphorylation; when associated with A-94." evidence="12">
    <original>S</original>
    <variation>A</variation>
    <location>
        <position position="86"/>
    </location>
</feature>
<feature type="mutagenesis site" description="Abolishes ABA-dependent phosphorylation; when associated with A-86." evidence="12">
    <original>S</original>
    <variation>A</variation>
    <location>
        <position position="94"/>
    </location>
</feature>
<feature type="mutagenesis site" description="Abolishes ABA-dependent phosphorylation." evidence="12">
    <original>T</original>
    <variation>A</variation>
    <location>
        <position position="135"/>
    </location>
</feature>
<evidence type="ECO:0000250" key="1"/>
<evidence type="ECO:0000250" key="2">
    <source>
        <dbReference type="UniProtKB" id="Q9LES3"/>
    </source>
</evidence>
<evidence type="ECO:0000250" key="3">
    <source>
        <dbReference type="UniProtKB" id="Q9M7Q2"/>
    </source>
</evidence>
<evidence type="ECO:0000255" key="4"/>
<evidence type="ECO:0000255" key="5">
    <source>
        <dbReference type="PROSITE-ProRule" id="PRU00978"/>
    </source>
</evidence>
<evidence type="ECO:0000256" key="6">
    <source>
        <dbReference type="SAM" id="MobiDB-lite"/>
    </source>
</evidence>
<evidence type="ECO:0000269" key="7">
    <source>
    </source>
</evidence>
<evidence type="ECO:0000269" key="8">
    <source>
    </source>
</evidence>
<evidence type="ECO:0000269" key="9">
    <source>
    </source>
</evidence>
<evidence type="ECO:0000269" key="10">
    <source>
    </source>
</evidence>
<evidence type="ECO:0000269" key="11">
    <source>
    </source>
</evidence>
<evidence type="ECO:0000269" key="12">
    <source>
    </source>
</evidence>
<evidence type="ECO:0000269" key="13">
    <source>
    </source>
</evidence>
<evidence type="ECO:0000269" key="14">
    <source>
    </source>
</evidence>
<evidence type="ECO:0000305" key="15"/>